<protein>
    <recommendedName>
        <fullName evidence="1">Oligoribonuclease</fullName>
        <ecNumber evidence="1">3.1.15.-</ecNumber>
    </recommendedName>
</protein>
<reference key="1">
    <citation type="journal article" date="2006" name="PLoS Biol.">
        <title>The genome of deep-sea vent chemolithoautotroph Thiomicrospira crunogena XCL-2.</title>
        <authorList>
            <person name="Scott K.M."/>
            <person name="Sievert S.M."/>
            <person name="Abril F.N."/>
            <person name="Ball L.A."/>
            <person name="Barrett C.J."/>
            <person name="Blake R.A."/>
            <person name="Boller A.J."/>
            <person name="Chain P.S.G."/>
            <person name="Clark J.A."/>
            <person name="Davis C.R."/>
            <person name="Detter C."/>
            <person name="Do K.F."/>
            <person name="Dobrinski K.P."/>
            <person name="Faza B.I."/>
            <person name="Fitzpatrick K.A."/>
            <person name="Freyermuth S.K."/>
            <person name="Harmer T.L."/>
            <person name="Hauser L.J."/>
            <person name="Huegler M."/>
            <person name="Kerfeld C.A."/>
            <person name="Klotz M.G."/>
            <person name="Kong W.W."/>
            <person name="Land M."/>
            <person name="Lapidus A."/>
            <person name="Larimer F.W."/>
            <person name="Longo D.L."/>
            <person name="Lucas S."/>
            <person name="Malfatti S.A."/>
            <person name="Massey S.E."/>
            <person name="Martin D.D."/>
            <person name="McCuddin Z."/>
            <person name="Meyer F."/>
            <person name="Moore J.L."/>
            <person name="Ocampo L.H. Jr."/>
            <person name="Paul J.H."/>
            <person name="Paulsen I.T."/>
            <person name="Reep D.K."/>
            <person name="Ren Q."/>
            <person name="Ross R.L."/>
            <person name="Sato P.Y."/>
            <person name="Thomas P."/>
            <person name="Tinkham L.E."/>
            <person name="Zeruth G.T."/>
        </authorList>
    </citation>
    <scope>NUCLEOTIDE SEQUENCE [LARGE SCALE GENOMIC DNA]</scope>
    <source>
        <strain>DSM 25203 / XCL-2</strain>
    </source>
</reference>
<gene>
    <name evidence="1" type="primary">orn</name>
    <name type="ordered locus">Tcr_0633</name>
</gene>
<organism>
    <name type="scientific">Hydrogenovibrio crunogenus (strain DSM 25203 / XCL-2)</name>
    <name type="common">Thiomicrospira crunogena</name>
    <dbReference type="NCBI Taxonomy" id="317025"/>
    <lineage>
        <taxon>Bacteria</taxon>
        <taxon>Pseudomonadati</taxon>
        <taxon>Pseudomonadota</taxon>
        <taxon>Gammaproteobacteria</taxon>
        <taxon>Thiotrichales</taxon>
        <taxon>Piscirickettsiaceae</taxon>
        <taxon>Hydrogenovibrio</taxon>
    </lineage>
</organism>
<proteinExistence type="inferred from homology"/>
<accession>Q31HZ4</accession>
<keyword id="KW-0963">Cytoplasm</keyword>
<keyword id="KW-0269">Exonuclease</keyword>
<keyword id="KW-0378">Hydrolase</keyword>
<keyword id="KW-0540">Nuclease</keyword>
<feature type="chain" id="PRO_1000004294" description="Oligoribonuclease">
    <location>
        <begin position="1"/>
        <end position="184"/>
    </location>
</feature>
<feature type="domain" description="Exonuclease" evidence="1">
    <location>
        <begin position="7"/>
        <end position="170"/>
    </location>
</feature>
<feature type="active site" evidence="1">
    <location>
        <position position="128"/>
    </location>
</feature>
<evidence type="ECO:0000255" key="1">
    <source>
        <dbReference type="HAMAP-Rule" id="MF_00045"/>
    </source>
</evidence>
<dbReference type="EC" id="3.1.15.-" evidence="1"/>
<dbReference type="EMBL" id="CP000109">
    <property type="protein sequence ID" value="ABB41229.1"/>
    <property type="molecule type" value="Genomic_DNA"/>
</dbReference>
<dbReference type="SMR" id="Q31HZ4"/>
<dbReference type="STRING" id="317025.Tcr_0633"/>
<dbReference type="KEGG" id="tcx:Tcr_0633"/>
<dbReference type="eggNOG" id="COG1949">
    <property type="taxonomic scope" value="Bacteria"/>
</dbReference>
<dbReference type="HOGENOM" id="CLU_064761_2_0_6"/>
<dbReference type="OrthoDB" id="9801329at2"/>
<dbReference type="GO" id="GO:0005737">
    <property type="term" value="C:cytoplasm"/>
    <property type="evidence" value="ECO:0007669"/>
    <property type="project" value="UniProtKB-SubCell"/>
</dbReference>
<dbReference type="GO" id="GO:0000175">
    <property type="term" value="F:3'-5'-RNA exonuclease activity"/>
    <property type="evidence" value="ECO:0007669"/>
    <property type="project" value="InterPro"/>
</dbReference>
<dbReference type="GO" id="GO:0003676">
    <property type="term" value="F:nucleic acid binding"/>
    <property type="evidence" value="ECO:0007669"/>
    <property type="project" value="InterPro"/>
</dbReference>
<dbReference type="GO" id="GO:0006259">
    <property type="term" value="P:DNA metabolic process"/>
    <property type="evidence" value="ECO:0007669"/>
    <property type="project" value="UniProtKB-ARBA"/>
</dbReference>
<dbReference type="CDD" id="cd06135">
    <property type="entry name" value="Orn"/>
    <property type="match status" value="1"/>
</dbReference>
<dbReference type="FunFam" id="3.30.420.10:FF:000003">
    <property type="entry name" value="Oligoribonuclease"/>
    <property type="match status" value="1"/>
</dbReference>
<dbReference type="Gene3D" id="3.30.420.10">
    <property type="entry name" value="Ribonuclease H-like superfamily/Ribonuclease H"/>
    <property type="match status" value="1"/>
</dbReference>
<dbReference type="HAMAP" id="MF_00045">
    <property type="entry name" value="Oligoribonuclease"/>
    <property type="match status" value="1"/>
</dbReference>
<dbReference type="InterPro" id="IPR013520">
    <property type="entry name" value="Exonuclease_RNaseT/DNA_pol3"/>
</dbReference>
<dbReference type="InterPro" id="IPR022894">
    <property type="entry name" value="Oligoribonuclease"/>
</dbReference>
<dbReference type="InterPro" id="IPR012337">
    <property type="entry name" value="RNaseH-like_sf"/>
</dbReference>
<dbReference type="InterPro" id="IPR036397">
    <property type="entry name" value="RNaseH_sf"/>
</dbReference>
<dbReference type="NCBIfam" id="NF003765">
    <property type="entry name" value="PRK05359.1"/>
    <property type="match status" value="1"/>
</dbReference>
<dbReference type="PANTHER" id="PTHR11046">
    <property type="entry name" value="OLIGORIBONUCLEASE, MITOCHONDRIAL"/>
    <property type="match status" value="1"/>
</dbReference>
<dbReference type="PANTHER" id="PTHR11046:SF0">
    <property type="entry name" value="OLIGORIBONUCLEASE, MITOCHONDRIAL"/>
    <property type="match status" value="1"/>
</dbReference>
<dbReference type="Pfam" id="PF00929">
    <property type="entry name" value="RNase_T"/>
    <property type="match status" value="1"/>
</dbReference>
<dbReference type="SMART" id="SM00479">
    <property type="entry name" value="EXOIII"/>
    <property type="match status" value="1"/>
</dbReference>
<dbReference type="SUPFAM" id="SSF53098">
    <property type="entry name" value="Ribonuclease H-like"/>
    <property type="match status" value="1"/>
</dbReference>
<name>ORN_HYDCU</name>
<comment type="function">
    <text evidence="1">3'-to-5' exoribonuclease specific for small oligoribonucleotides.</text>
</comment>
<comment type="subcellular location">
    <subcellularLocation>
        <location evidence="1">Cytoplasm</location>
    </subcellularLocation>
</comment>
<comment type="similarity">
    <text evidence="1">Belongs to the oligoribonuclease family.</text>
</comment>
<sequence length="184" mass="21259">MKSENNLIWIDLEMTGLDHKADQIIEIATVVTDAELNVLAEGPVMAIQTEQHYLDGMDAWCTTHHGNSGLTKRVQESTITMAQAEQETIKFLKPYVPKGKSPMCGNSICQDRRFLIEQMPELEQFFHYRNLDVSSLKELARRWAPTVYSGYKKKGAHLALDDIYESIEELKYYRQNLFLPEFQQ</sequence>